<evidence type="ECO:0000255" key="1">
    <source>
        <dbReference type="HAMAP-Rule" id="MF_01703"/>
    </source>
</evidence>
<organism>
    <name type="scientific">Pseudomonas aeruginosa (strain ATCC 15692 / DSM 22644 / CIP 104116 / JCM 14847 / LMG 12228 / 1C / PRS 101 / PAO1)</name>
    <dbReference type="NCBI Taxonomy" id="208964"/>
    <lineage>
        <taxon>Bacteria</taxon>
        <taxon>Pseudomonadati</taxon>
        <taxon>Pseudomonadota</taxon>
        <taxon>Gammaproteobacteria</taxon>
        <taxon>Pseudomonadales</taxon>
        <taxon>Pseudomonadaceae</taxon>
        <taxon>Pseudomonas</taxon>
    </lineage>
</organism>
<gene>
    <name evidence="1" type="primary">msbA</name>
    <name type="ordered locus">PA4997</name>
</gene>
<keyword id="KW-0067">ATP-binding</keyword>
<keyword id="KW-0997">Cell inner membrane</keyword>
<keyword id="KW-1003">Cell membrane</keyword>
<keyword id="KW-0445">Lipid transport</keyword>
<keyword id="KW-0472">Membrane</keyword>
<keyword id="KW-0547">Nucleotide-binding</keyword>
<keyword id="KW-1185">Reference proteome</keyword>
<keyword id="KW-1278">Translocase</keyword>
<keyword id="KW-0812">Transmembrane</keyword>
<keyword id="KW-1133">Transmembrane helix</keyword>
<keyword id="KW-0813">Transport</keyword>
<feature type="chain" id="PRO_0000092593" description="ATP-dependent lipid A-core flippase">
    <location>
        <begin position="1"/>
        <end position="603"/>
    </location>
</feature>
<feature type="transmembrane region" description="Helical" evidence="1">
    <location>
        <begin position="20"/>
        <end position="40"/>
    </location>
</feature>
<feature type="transmembrane region" description="Helical" evidence="1">
    <location>
        <begin position="79"/>
        <end position="99"/>
    </location>
</feature>
<feature type="transmembrane region" description="Helical" evidence="1">
    <location>
        <begin position="170"/>
        <end position="190"/>
    </location>
</feature>
<feature type="transmembrane region" description="Helical" evidence="1">
    <location>
        <begin position="269"/>
        <end position="289"/>
    </location>
</feature>
<feature type="domain" description="ABC transmembrane type-1" evidence="1">
    <location>
        <begin position="31"/>
        <end position="324"/>
    </location>
</feature>
<feature type="domain" description="ABC transporter" evidence="1">
    <location>
        <begin position="356"/>
        <end position="592"/>
    </location>
</feature>
<feature type="binding site" evidence="1">
    <location>
        <begin position="390"/>
        <end position="397"/>
    </location>
    <ligand>
        <name>ATP</name>
        <dbReference type="ChEBI" id="CHEBI:30616"/>
    </ligand>
</feature>
<proteinExistence type="inferred from homology"/>
<protein>
    <recommendedName>
        <fullName evidence="1">ATP-dependent lipid A-core flippase</fullName>
        <ecNumber evidence="1">7.5.2.6</ecNumber>
    </recommendedName>
    <alternativeName>
        <fullName evidence="1">Lipid A export ATP-binding/permease protein MsbA</fullName>
    </alternativeName>
</protein>
<sequence length="603" mass="66432">MSDSPQNPGPSSLKIYFRLLGYVKPYIGMFLLSIVGFLIFASTQPMLAGILKYFVDGLSNPDAALFPNVQWPWLRDLHLVYAVPLLIILIAAWQGLGSFLGNFFLAKVSLGLVHDLRVALFNKLLVLPNRYFDTHSSGHLISRITFNVTMVTGAATDAIKVVIREGLTVVFLFLYLLWMNWKLTLVMLAILPVIAVMVTTASRKFRKQSKKIQVAMGDVTHVASETIQGYRVVRSFGGEAYEEKRFLDASQSNTDKQLRMTKTGAVYTPMLQLVIYVAMAILMFLVLWLRGDASAGDLVAYITAAGLLPKPIRQLSEVSSTVQRGVAGAESIFEQLDEAAEEDQGTVEKERVSGRLEVRNLSFRYPGTDKQVLDDISFIAEPGQMIALVGRSGSGKSTLANLVPRFYQHNDGKILLDGVEVEDYRLRNLRRHIALVTQQVTLFNDSVANNIAYGDLAGAPREEIERAAKAANAKEFIDNLPQGFDTEVGENGVLLSGGQRQRLAIARALLKDAPLLILDEATSALDTESERHIQAALDEVMKGRTTLVIAHRLSTIEKADLILVMDQGQIVERGSHAELLAQNGHYARLHAMGLDEQAPAPVG</sequence>
<name>MSBA_PSEAE</name>
<dbReference type="EC" id="7.5.2.6" evidence="1"/>
<dbReference type="EMBL" id="AE004091">
    <property type="protein sequence ID" value="AAG08382.1"/>
    <property type="molecule type" value="Genomic_DNA"/>
</dbReference>
<dbReference type="PIR" id="B83022">
    <property type="entry name" value="B83022"/>
</dbReference>
<dbReference type="RefSeq" id="NP_253684.1">
    <property type="nucleotide sequence ID" value="NC_002516.2"/>
</dbReference>
<dbReference type="RefSeq" id="WP_003114544.1">
    <property type="nucleotide sequence ID" value="NZ_QZGE01000002.1"/>
</dbReference>
<dbReference type="SMR" id="Q9HUG8"/>
<dbReference type="FunCoup" id="Q9HUG8">
    <property type="interactions" value="574"/>
</dbReference>
<dbReference type="STRING" id="208964.PA4997"/>
<dbReference type="PaxDb" id="208964-PA4997"/>
<dbReference type="GeneID" id="881672"/>
<dbReference type="KEGG" id="pae:PA4997"/>
<dbReference type="PATRIC" id="fig|208964.12.peg.5237"/>
<dbReference type="PseudoCAP" id="PA4997"/>
<dbReference type="HOGENOM" id="CLU_000604_84_3_6"/>
<dbReference type="InParanoid" id="Q9HUG8"/>
<dbReference type="OrthoDB" id="9806127at2"/>
<dbReference type="PhylomeDB" id="Q9HUG8"/>
<dbReference type="BioCyc" id="PAER208964:G1FZ6-5113-MONOMER"/>
<dbReference type="BRENDA" id="7.5.2.6">
    <property type="organism ID" value="5087"/>
</dbReference>
<dbReference type="Proteomes" id="UP000002438">
    <property type="component" value="Chromosome"/>
</dbReference>
<dbReference type="GO" id="GO:0005886">
    <property type="term" value="C:plasma membrane"/>
    <property type="evidence" value="ECO:0007669"/>
    <property type="project" value="UniProtKB-SubCell"/>
</dbReference>
<dbReference type="GO" id="GO:0140359">
    <property type="term" value="F:ABC-type transporter activity"/>
    <property type="evidence" value="ECO:0007669"/>
    <property type="project" value="InterPro"/>
</dbReference>
<dbReference type="GO" id="GO:0005524">
    <property type="term" value="F:ATP binding"/>
    <property type="evidence" value="ECO:0007669"/>
    <property type="project" value="UniProtKB-KW"/>
</dbReference>
<dbReference type="GO" id="GO:0016887">
    <property type="term" value="F:ATP hydrolysis activity"/>
    <property type="evidence" value="ECO:0000314"/>
    <property type="project" value="PseudoCAP"/>
</dbReference>
<dbReference type="GO" id="GO:0005347">
    <property type="term" value="F:ATP transmembrane transporter activity"/>
    <property type="evidence" value="ECO:0000314"/>
    <property type="project" value="PseudoCAP"/>
</dbReference>
<dbReference type="GO" id="GO:0034040">
    <property type="term" value="F:ATPase-coupled lipid transmembrane transporter activity"/>
    <property type="evidence" value="ECO:0007669"/>
    <property type="project" value="InterPro"/>
</dbReference>
<dbReference type="GO" id="GO:0042626">
    <property type="term" value="F:ATPase-coupled transmembrane transporter activity"/>
    <property type="evidence" value="ECO:0000318"/>
    <property type="project" value="GO_Central"/>
</dbReference>
<dbReference type="GO" id="GO:0009245">
    <property type="term" value="P:lipid A biosynthetic process"/>
    <property type="evidence" value="ECO:0000315"/>
    <property type="project" value="PseudoCAP"/>
</dbReference>
<dbReference type="GO" id="GO:0015920">
    <property type="term" value="P:lipopolysaccharide transport"/>
    <property type="evidence" value="ECO:0000315"/>
    <property type="project" value="PseudoCAP"/>
</dbReference>
<dbReference type="GO" id="GO:0055085">
    <property type="term" value="P:transmembrane transport"/>
    <property type="evidence" value="ECO:0000318"/>
    <property type="project" value="GO_Central"/>
</dbReference>
<dbReference type="CDD" id="cd18552">
    <property type="entry name" value="ABC_6TM_MsbA_like"/>
    <property type="match status" value="1"/>
</dbReference>
<dbReference type="CDD" id="cd03251">
    <property type="entry name" value="ABCC_MsbA"/>
    <property type="match status" value="1"/>
</dbReference>
<dbReference type="FunFam" id="3.40.50.300:FF:000140">
    <property type="entry name" value="Lipid A export ATP-binding/permease protein MsbA"/>
    <property type="match status" value="1"/>
</dbReference>
<dbReference type="Gene3D" id="1.20.1560.10">
    <property type="entry name" value="ABC transporter type 1, transmembrane domain"/>
    <property type="match status" value="1"/>
</dbReference>
<dbReference type="Gene3D" id="3.40.50.300">
    <property type="entry name" value="P-loop containing nucleotide triphosphate hydrolases"/>
    <property type="match status" value="1"/>
</dbReference>
<dbReference type="InterPro" id="IPR003593">
    <property type="entry name" value="AAA+_ATPase"/>
</dbReference>
<dbReference type="InterPro" id="IPR011527">
    <property type="entry name" value="ABC1_TM_dom"/>
</dbReference>
<dbReference type="InterPro" id="IPR036640">
    <property type="entry name" value="ABC1_TM_sf"/>
</dbReference>
<dbReference type="InterPro" id="IPR003439">
    <property type="entry name" value="ABC_transporter-like_ATP-bd"/>
</dbReference>
<dbReference type="InterPro" id="IPR017871">
    <property type="entry name" value="ABC_transporter-like_CS"/>
</dbReference>
<dbReference type="InterPro" id="IPR011917">
    <property type="entry name" value="ABC_transpr_lipidA"/>
</dbReference>
<dbReference type="InterPro" id="IPR027417">
    <property type="entry name" value="P-loop_NTPase"/>
</dbReference>
<dbReference type="InterPro" id="IPR039421">
    <property type="entry name" value="Type_1_exporter"/>
</dbReference>
<dbReference type="NCBIfam" id="TIGR02203">
    <property type="entry name" value="MsbA_lipidA"/>
    <property type="match status" value="1"/>
</dbReference>
<dbReference type="PANTHER" id="PTHR43394:SF1">
    <property type="entry name" value="ATP-BINDING CASSETTE SUB-FAMILY B MEMBER 10, MITOCHONDRIAL"/>
    <property type="match status" value="1"/>
</dbReference>
<dbReference type="PANTHER" id="PTHR43394">
    <property type="entry name" value="ATP-DEPENDENT PERMEASE MDL1, MITOCHONDRIAL"/>
    <property type="match status" value="1"/>
</dbReference>
<dbReference type="Pfam" id="PF00664">
    <property type="entry name" value="ABC_membrane"/>
    <property type="match status" value="1"/>
</dbReference>
<dbReference type="Pfam" id="PF00005">
    <property type="entry name" value="ABC_tran"/>
    <property type="match status" value="1"/>
</dbReference>
<dbReference type="SMART" id="SM00382">
    <property type="entry name" value="AAA"/>
    <property type="match status" value="1"/>
</dbReference>
<dbReference type="SUPFAM" id="SSF90123">
    <property type="entry name" value="ABC transporter transmembrane region"/>
    <property type="match status" value="1"/>
</dbReference>
<dbReference type="SUPFAM" id="SSF52540">
    <property type="entry name" value="P-loop containing nucleoside triphosphate hydrolases"/>
    <property type="match status" value="1"/>
</dbReference>
<dbReference type="PROSITE" id="PS50929">
    <property type="entry name" value="ABC_TM1F"/>
    <property type="match status" value="1"/>
</dbReference>
<dbReference type="PROSITE" id="PS00211">
    <property type="entry name" value="ABC_TRANSPORTER_1"/>
    <property type="match status" value="1"/>
</dbReference>
<dbReference type="PROSITE" id="PS50893">
    <property type="entry name" value="ABC_TRANSPORTER_2"/>
    <property type="match status" value="1"/>
</dbReference>
<dbReference type="PROSITE" id="PS51239">
    <property type="entry name" value="MSBA"/>
    <property type="match status" value="1"/>
</dbReference>
<accession>Q9HUG8</accession>
<reference key="1">
    <citation type="journal article" date="2000" name="Nature">
        <title>Complete genome sequence of Pseudomonas aeruginosa PAO1, an opportunistic pathogen.</title>
        <authorList>
            <person name="Stover C.K."/>
            <person name="Pham X.-Q.T."/>
            <person name="Erwin A.L."/>
            <person name="Mizoguchi S.D."/>
            <person name="Warrener P."/>
            <person name="Hickey M.J."/>
            <person name="Brinkman F.S.L."/>
            <person name="Hufnagle W.O."/>
            <person name="Kowalik D.J."/>
            <person name="Lagrou M."/>
            <person name="Garber R.L."/>
            <person name="Goltry L."/>
            <person name="Tolentino E."/>
            <person name="Westbrock-Wadman S."/>
            <person name="Yuan Y."/>
            <person name="Brody L.L."/>
            <person name="Coulter S.N."/>
            <person name="Folger K.R."/>
            <person name="Kas A."/>
            <person name="Larbig K."/>
            <person name="Lim R.M."/>
            <person name="Smith K.A."/>
            <person name="Spencer D.H."/>
            <person name="Wong G.K.-S."/>
            <person name="Wu Z."/>
            <person name="Paulsen I.T."/>
            <person name="Reizer J."/>
            <person name="Saier M.H. Jr."/>
            <person name="Hancock R.E.W."/>
            <person name="Lory S."/>
            <person name="Olson M.V."/>
        </authorList>
    </citation>
    <scope>NUCLEOTIDE SEQUENCE [LARGE SCALE GENOMIC DNA]</scope>
    <source>
        <strain>ATCC 15692 / DSM 22644 / CIP 104116 / JCM 14847 / LMG 12228 / 1C / PRS 101 / PAO1</strain>
    </source>
</reference>
<comment type="function">
    <text evidence="1">Involved in lipopolysaccharide (LPS) biosynthesis. Translocates lipid A-core from the inner to the outer leaflet of the inner membrane. Transmembrane domains (TMD) form a pore in the inner membrane and the ATP-binding domain (NBD) is responsible for energy generation.</text>
</comment>
<comment type="catalytic activity">
    <reaction evidence="1">
        <text>ATP + H2O + lipid A-core oligosaccharideSide 1 = ADP + phosphate + lipid A-core oligosaccharideSide 2.</text>
        <dbReference type="EC" id="7.5.2.6"/>
    </reaction>
</comment>
<comment type="subunit">
    <text evidence="1">Homodimer.</text>
</comment>
<comment type="subcellular location">
    <subcellularLocation>
        <location evidence="1">Cell inner membrane</location>
        <topology evidence="1">Multi-pass membrane protein</topology>
    </subcellularLocation>
</comment>
<comment type="domain">
    <text evidence="1">In MsbA the ATP-binding domain (NBD) and the transmembrane domain (TMD) are fused.</text>
</comment>
<comment type="similarity">
    <text evidence="1">Belongs to the ABC transporter superfamily. Lipid exporter (TC 3.A.1.106) family.</text>
</comment>